<proteinExistence type="inferred from homology"/>
<gene>
    <name evidence="1" type="primary">eno</name>
    <name type="ordered locus">Cagg_3739</name>
</gene>
<name>ENO_CHLAD</name>
<organism>
    <name type="scientific">Chloroflexus aggregans (strain MD-66 / DSM 9485)</name>
    <dbReference type="NCBI Taxonomy" id="326427"/>
    <lineage>
        <taxon>Bacteria</taxon>
        <taxon>Bacillati</taxon>
        <taxon>Chloroflexota</taxon>
        <taxon>Chloroflexia</taxon>
        <taxon>Chloroflexales</taxon>
        <taxon>Chloroflexineae</taxon>
        <taxon>Chloroflexaceae</taxon>
        <taxon>Chloroflexus</taxon>
    </lineage>
</organism>
<evidence type="ECO:0000255" key="1">
    <source>
        <dbReference type="HAMAP-Rule" id="MF_00318"/>
    </source>
</evidence>
<dbReference type="EC" id="4.2.1.11" evidence="1"/>
<dbReference type="EMBL" id="CP001337">
    <property type="protein sequence ID" value="ACL26575.1"/>
    <property type="molecule type" value="Genomic_DNA"/>
</dbReference>
<dbReference type="RefSeq" id="WP_015942420.1">
    <property type="nucleotide sequence ID" value="NC_011831.1"/>
</dbReference>
<dbReference type="SMR" id="B8GAX5"/>
<dbReference type="STRING" id="326427.Cagg_3739"/>
<dbReference type="KEGG" id="cag:Cagg_3739"/>
<dbReference type="eggNOG" id="COG0148">
    <property type="taxonomic scope" value="Bacteria"/>
</dbReference>
<dbReference type="HOGENOM" id="CLU_031223_2_1_0"/>
<dbReference type="OrthoDB" id="9804716at2"/>
<dbReference type="UniPathway" id="UPA00109">
    <property type="reaction ID" value="UER00187"/>
</dbReference>
<dbReference type="Proteomes" id="UP000002508">
    <property type="component" value="Chromosome"/>
</dbReference>
<dbReference type="GO" id="GO:0009986">
    <property type="term" value="C:cell surface"/>
    <property type="evidence" value="ECO:0007669"/>
    <property type="project" value="UniProtKB-SubCell"/>
</dbReference>
<dbReference type="GO" id="GO:0005576">
    <property type="term" value="C:extracellular region"/>
    <property type="evidence" value="ECO:0007669"/>
    <property type="project" value="UniProtKB-SubCell"/>
</dbReference>
<dbReference type="GO" id="GO:0000015">
    <property type="term" value="C:phosphopyruvate hydratase complex"/>
    <property type="evidence" value="ECO:0007669"/>
    <property type="project" value="InterPro"/>
</dbReference>
<dbReference type="GO" id="GO:0000287">
    <property type="term" value="F:magnesium ion binding"/>
    <property type="evidence" value="ECO:0007669"/>
    <property type="project" value="UniProtKB-UniRule"/>
</dbReference>
<dbReference type="GO" id="GO:0004634">
    <property type="term" value="F:phosphopyruvate hydratase activity"/>
    <property type="evidence" value="ECO:0007669"/>
    <property type="project" value="UniProtKB-UniRule"/>
</dbReference>
<dbReference type="GO" id="GO:0006096">
    <property type="term" value="P:glycolytic process"/>
    <property type="evidence" value="ECO:0007669"/>
    <property type="project" value="UniProtKB-UniRule"/>
</dbReference>
<dbReference type="CDD" id="cd03313">
    <property type="entry name" value="enolase"/>
    <property type="match status" value="1"/>
</dbReference>
<dbReference type="FunFam" id="3.20.20.120:FF:000001">
    <property type="entry name" value="Enolase"/>
    <property type="match status" value="1"/>
</dbReference>
<dbReference type="FunFam" id="3.30.390.10:FF:000001">
    <property type="entry name" value="Enolase"/>
    <property type="match status" value="1"/>
</dbReference>
<dbReference type="Gene3D" id="3.20.20.120">
    <property type="entry name" value="Enolase-like C-terminal domain"/>
    <property type="match status" value="1"/>
</dbReference>
<dbReference type="Gene3D" id="3.30.390.10">
    <property type="entry name" value="Enolase-like, N-terminal domain"/>
    <property type="match status" value="1"/>
</dbReference>
<dbReference type="HAMAP" id="MF_00318">
    <property type="entry name" value="Enolase"/>
    <property type="match status" value="1"/>
</dbReference>
<dbReference type="InterPro" id="IPR000941">
    <property type="entry name" value="Enolase"/>
</dbReference>
<dbReference type="InterPro" id="IPR036849">
    <property type="entry name" value="Enolase-like_C_sf"/>
</dbReference>
<dbReference type="InterPro" id="IPR029017">
    <property type="entry name" value="Enolase-like_N"/>
</dbReference>
<dbReference type="InterPro" id="IPR020810">
    <property type="entry name" value="Enolase_C"/>
</dbReference>
<dbReference type="InterPro" id="IPR020809">
    <property type="entry name" value="Enolase_CS"/>
</dbReference>
<dbReference type="InterPro" id="IPR020811">
    <property type="entry name" value="Enolase_N"/>
</dbReference>
<dbReference type="NCBIfam" id="TIGR01060">
    <property type="entry name" value="eno"/>
    <property type="match status" value="1"/>
</dbReference>
<dbReference type="PANTHER" id="PTHR11902">
    <property type="entry name" value="ENOLASE"/>
    <property type="match status" value="1"/>
</dbReference>
<dbReference type="PANTHER" id="PTHR11902:SF1">
    <property type="entry name" value="ENOLASE"/>
    <property type="match status" value="1"/>
</dbReference>
<dbReference type="Pfam" id="PF00113">
    <property type="entry name" value="Enolase_C"/>
    <property type="match status" value="1"/>
</dbReference>
<dbReference type="Pfam" id="PF03952">
    <property type="entry name" value="Enolase_N"/>
    <property type="match status" value="1"/>
</dbReference>
<dbReference type="PIRSF" id="PIRSF001400">
    <property type="entry name" value="Enolase"/>
    <property type="match status" value="1"/>
</dbReference>
<dbReference type="PRINTS" id="PR00148">
    <property type="entry name" value="ENOLASE"/>
</dbReference>
<dbReference type="SFLD" id="SFLDS00001">
    <property type="entry name" value="Enolase"/>
    <property type="match status" value="1"/>
</dbReference>
<dbReference type="SFLD" id="SFLDF00002">
    <property type="entry name" value="enolase"/>
    <property type="match status" value="1"/>
</dbReference>
<dbReference type="SMART" id="SM01192">
    <property type="entry name" value="Enolase_C"/>
    <property type="match status" value="1"/>
</dbReference>
<dbReference type="SMART" id="SM01193">
    <property type="entry name" value="Enolase_N"/>
    <property type="match status" value="1"/>
</dbReference>
<dbReference type="SUPFAM" id="SSF51604">
    <property type="entry name" value="Enolase C-terminal domain-like"/>
    <property type="match status" value="1"/>
</dbReference>
<dbReference type="SUPFAM" id="SSF54826">
    <property type="entry name" value="Enolase N-terminal domain-like"/>
    <property type="match status" value="1"/>
</dbReference>
<dbReference type="PROSITE" id="PS00164">
    <property type="entry name" value="ENOLASE"/>
    <property type="match status" value="1"/>
</dbReference>
<comment type="function">
    <text evidence="1">Catalyzes the reversible conversion of 2-phosphoglycerate (2-PG) into phosphoenolpyruvate (PEP). It is essential for the degradation of carbohydrates via glycolysis.</text>
</comment>
<comment type="catalytic activity">
    <reaction evidence="1">
        <text>(2R)-2-phosphoglycerate = phosphoenolpyruvate + H2O</text>
        <dbReference type="Rhea" id="RHEA:10164"/>
        <dbReference type="ChEBI" id="CHEBI:15377"/>
        <dbReference type="ChEBI" id="CHEBI:58289"/>
        <dbReference type="ChEBI" id="CHEBI:58702"/>
        <dbReference type="EC" id="4.2.1.11"/>
    </reaction>
</comment>
<comment type="cofactor">
    <cofactor evidence="1">
        <name>Mg(2+)</name>
        <dbReference type="ChEBI" id="CHEBI:18420"/>
    </cofactor>
    <text evidence="1">Binds a second Mg(2+) ion via substrate during catalysis.</text>
</comment>
<comment type="pathway">
    <text evidence="1">Carbohydrate degradation; glycolysis; pyruvate from D-glyceraldehyde 3-phosphate: step 4/5.</text>
</comment>
<comment type="subcellular location">
    <subcellularLocation>
        <location evidence="1">Cytoplasm</location>
    </subcellularLocation>
    <subcellularLocation>
        <location evidence="1">Secreted</location>
    </subcellularLocation>
    <subcellularLocation>
        <location evidence="1">Cell surface</location>
    </subcellularLocation>
    <text evidence="1">Fractions of enolase are present in both the cytoplasm and on the cell surface.</text>
</comment>
<comment type="similarity">
    <text evidence="1">Belongs to the enolase family.</text>
</comment>
<protein>
    <recommendedName>
        <fullName evidence="1">Enolase</fullName>
        <ecNumber evidence="1">4.2.1.11</ecNumber>
    </recommendedName>
    <alternativeName>
        <fullName evidence="1">2-phospho-D-glycerate hydro-lyase</fullName>
    </alternativeName>
    <alternativeName>
        <fullName evidence="1">2-phosphoglycerate dehydratase</fullName>
    </alternativeName>
</protein>
<accession>B8GAX5</accession>
<feature type="chain" id="PRO_1000132993" description="Enolase">
    <location>
        <begin position="1"/>
        <end position="431"/>
    </location>
</feature>
<feature type="active site" description="Proton donor" evidence="1">
    <location>
        <position position="206"/>
    </location>
</feature>
<feature type="active site" description="Proton acceptor" evidence="1">
    <location>
        <position position="338"/>
    </location>
</feature>
<feature type="binding site" evidence="1">
    <location>
        <position position="164"/>
    </location>
    <ligand>
        <name>(2R)-2-phosphoglycerate</name>
        <dbReference type="ChEBI" id="CHEBI:58289"/>
    </ligand>
</feature>
<feature type="binding site" evidence="1">
    <location>
        <position position="243"/>
    </location>
    <ligand>
        <name>Mg(2+)</name>
        <dbReference type="ChEBI" id="CHEBI:18420"/>
    </ligand>
</feature>
<feature type="binding site" evidence="1">
    <location>
        <position position="286"/>
    </location>
    <ligand>
        <name>Mg(2+)</name>
        <dbReference type="ChEBI" id="CHEBI:18420"/>
    </ligand>
</feature>
<feature type="binding site" evidence="1">
    <location>
        <position position="313"/>
    </location>
    <ligand>
        <name>Mg(2+)</name>
        <dbReference type="ChEBI" id="CHEBI:18420"/>
    </ligand>
</feature>
<feature type="binding site" evidence="1">
    <location>
        <position position="338"/>
    </location>
    <ligand>
        <name>(2R)-2-phosphoglycerate</name>
        <dbReference type="ChEBI" id="CHEBI:58289"/>
    </ligand>
</feature>
<feature type="binding site" evidence="1">
    <location>
        <position position="367"/>
    </location>
    <ligand>
        <name>(2R)-2-phosphoglycerate</name>
        <dbReference type="ChEBI" id="CHEBI:58289"/>
    </ligand>
</feature>
<feature type="binding site" evidence="1">
    <location>
        <position position="368"/>
    </location>
    <ligand>
        <name>(2R)-2-phosphoglycerate</name>
        <dbReference type="ChEBI" id="CHEBI:58289"/>
    </ligand>
</feature>
<feature type="binding site" evidence="1">
    <location>
        <position position="389"/>
    </location>
    <ligand>
        <name>(2R)-2-phosphoglycerate</name>
        <dbReference type="ChEBI" id="CHEBI:58289"/>
    </ligand>
</feature>
<reference key="1">
    <citation type="submission" date="2008-12" db="EMBL/GenBank/DDBJ databases">
        <title>Complete sequence of Chloroflexus aggregans DSM 9485.</title>
        <authorList>
            <consortium name="US DOE Joint Genome Institute"/>
            <person name="Lucas S."/>
            <person name="Copeland A."/>
            <person name="Lapidus A."/>
            <person name="Glavina del Rio T."/>
            <person name="Dalin E."/>
            <person name="Tice H."/>
            <person name="Pitluck S."/>
            <person name="Foster B."/>
            <person name="Larimer F."/>
            <person name="Land M."/>
            <person name="Hauser L."/>
            <person name="Kyrpides N."/>
            <person name="Mikhailova N."/>
            <person name="Bryant D.A."/>
            <person name="Richardson P."/>
        </authorList>
    </citation>
    <scope>NUCLEOTIDE SEQUENCE [LARGE SCALE GENOMIC DNA]</scope>
    <source>
        <strain>MD-66 / DSM 9485</strain>
    </source>
</reference>
<keyword id="KW-0963">Cytoplasm</keyword>
<keyword id="KW-0324">Glycolysis</keyword>
<keyword id="KW-0456">Lyase</keyword>
<keyword id="KW-0460">Magnesium</keyword>
<keyword id="KW-0479">Metal-binding</keyword>
<keyword id="KW-0964">Secreted</keyword>
<sequence length="431" mass="46570">MSTLIEAIIAREVLDSRGNPTIEVDVRLESGDVGRAIVPSGASTGAHEALELRDGDKSRYNGKGVLKAVQAVNEDIAEALIGFDAADQIALDNELIALDGTPNKSKLGANAILGVSLAAAKAAAAAFGLPLYRYLGGVYAHVLPVPMMNIMNGGQHATNSTDFQEFMIMPVGADSFREGLRWGAEIYHALKKVIHDRGFSTTVGDEGGFAPSLPTNDAPLQLIMEAIEKAGYRPGEQIYIALDPATTEIYEDGKYHLKREGRVLTSAEMVDYWVDLVNRYPIISIEDGLAEDDWEGWQLLRSKLGHKIQLVGDDFLVTNVQRLRRAIDARAANSILIKLNQIGSLTETLSAIQLAQRSGWTAVVSHRSGESEDVTIADLVVATNAGQIKTGAPARTDRIAKYNQLLRIEEELGSAAQYAGRNAFTSIPHPL</sequence>